<accession>Q5UPU2</accession>
<protein>
    <recommendedName>
        <fullName>Uncharacterized protein R252</fullName>
    </recommendedName>
</protein>
<sequence>MMIHIHQDKKMSTRSNKKSTKTEKVAKATKPVENVEVSDNEVQEQAVKTKASGKKVTAKSTKQSGGKNAKSGSKSAKSGSKSAKSGSKTSKTQSGGKGDESRDRYFKLIDAKTGRSFGRYTGGTPKQAASKGFTKMIHKIKAEGGALPKNGTMKIYLRESTRGSPRKVYAYEATRKQLTEPQKIEIEGSDGKKKVITYRYRNVIHKVSAPLPNQLGGLKTSRSNKKSGETKKSGSRSSGSKRSAKPTKSAKNAKSTGNKKVSTKSAGAKKAPAAKASR</sequence>
<organism>
    <name type="scientific">Acanthamoeba polyphaga mimivirus</name>
    <name type="common">APMV</name>
    <dbReference type="NCBI Taxonomy" id="212035"/>
    <lineage>
        <taxon>Viruses</taxon>
        <taxon>Varidnaviria</taxon>
        <taxon>Bamfordvirae</taxon>
        <taxon>Nucleocytoviricota</taxon>
        <taxon>Megaviricetes</taxon>
        <taxon>Imitervirales</taxon>
        <taxon>Mimiviridae</taxon>
        <taxon>Megamimivirinae</taxon>
        <taxon>Mimivirus</taxon>
        <taxon>Mimivirus bradfordmassiliense</taxon>
    </lineage>
</organism>
<name>YR252_MIMIV</name>
<organismHost>
    <name type="scientific">Acanthamoeba polyphaga</name>
    <name type="common">Amoeba</name>
    <dbReference type="NCBI Taxonomy" id="5757"/>
</organismHost>
<reference key="1">
    <citation type="journal article" date="2004" name="Science">
        <title>The 1.2-megabase genome sequence of Mimivirus.</title>
        <authorList>
            <person name="Raoult D."/>
            <person name="Audic S."/>
            <person name="Robert C."/>
            <person name="Abergel C."/>
            <person name="Renesto P."/>
            <person name="Ogata H."/>
            <person name="La Scola B."/>
            <person name="Susan M."/>
            <person name="Claverie J.-M."/>
        </authorList>
    </citation>
    <scope>NUCLEOTIDE SEQUENCE [LARGE SCALE GENOMIC DNA]</scope>
    <source>
        <strain>Rowbotham-Bradford</strain>
    </source>
</reference>
<proteinExistence type="predicted"/>
<dbReference type="EMBL" id="AY653733">
    <property type="protein sequence ID" value="AAV50524.1"/>
    <property type="molecule type" value="Genomic_DNA"/>
</dbReference>
<dbReference type="KEGG" id="vg:9924860"/>
<dbReference type="OrthoDB" id="23390at10239"/>
<dbReference type="Proteomes" id="UP000001134">
    <property type="component" value="Genome"/>
</dbReference>
<dbReference type="GO" id="GO:0042262">
    <property type="term" value="P:DNA protection"/>
    <property type="evidence" value="ECO:0007669"/>
    <property type="project" value="InterPro"/>
</dbReference>
<dbReference type="Gene3D" id="3.10.470.10">
    <property type="entry name" value="Chromosomal protein MC1"/>
    <property type="match status" value="1"/>
</dbReference>
<dbReference type="InterPro" id="IPR036620">
    <property type="entry name" value="MC1_sf"/>
</dbReference>
<dbReference type="SUPFAM" id="SSF102875">
    <property type="entry name" value="Chromosomal protein MC1"/>
    <property type="match status" value="1"/>
</dbReference>
<feature type="chain" id="PRO_0000253264" description="Uncharacterized protein R252">
    <location>
        <begin position="1"/>
        <end position="278"/>
    </location>
</feature>
<feature type="region of interest" description="Disordered" evidence="1">
    <location>
        <begin position="1"/>
        <end position="107"/>
    </location>
</feature>
<feature type="region of interest" description="Disordered" evidence="1">
    <location>
        <begin position="206"/>
        <end position="278"/>
    </location>
</feature>
<feature type="compositionally biased region" description="Basic and acidic residues" evidence="1">
    <location>
        <begin position="1"/>
        <end position="11"/>
    </location>
</feature>
<feature type="compositionally biased region" description="Low complexity" evidence="1">
    <location>
        <begin position="62"/>
        <end position="94"/>
    </location>
</feature>
<feature type="compositionally biased region" description="Basic and acidic residues" evidence="1">
    <location>
        <begin position="97"/>
        <end position="107"/>
    </location>
</feature>
<feature type="compositionally biased region" description="Polar residues" evidence="1">
    <location>
        <begin position="249"/>
        <end position="260"/>
    </location>
</feature>
<feature type="compositionally biased region" description="Low complexity" evidence="1">
    <location>
        <begin position="264"/>
        <end position="278"/>
    </location>
</feature>
<keyword id="KW-1185">Reference proteome</keyword>
<gene>
    <name type="ordered locus">MIMI_R252</name>
</gene>
<evidence type="ECO:0000256" key="1">
    <source>
        <dbReference type="SAM" id="MobiDB-lite"/>
    </source>
</evidence>